<protein>
    <recommendedName>
        <fullName evidence="5">Histidine-binding periplasmic protein</fullName>
        <shortName>HBP</shortName>
    </recommendedName>
</protein>
<keyword id="KW-0002">3D-structure</keyword>
<keyword id="KW-0029">Amino-acid transport</keyword>
<keyword id="KW-0903">Direct protein sequencing</keyword>
<keyword id="KW-1015">Disulfide bond</keyword>
<keyword id="KW-0574">Periplasm</keyword>
<keyword id="KW-1185">Reference proteome</keyword>
<keyword id="KW-0732">Signal</keyword>
<keyword id="KW-0813">Transport</keyword>
<reference key="1">
    <citation type="submission" date="1996-01" db="EMBL/GenBank/DDBJ databases">
        <authorList>
            <person name="Joshi A."/>
            <person name="Ames G.F.-L."/>
        </authorList>
    </citation>
    <scope>NUCLEOTIDE SEQUENCE [GENOMIC DNA]</scope>
    <source>
        <strain>K12</strain>
    </source>
</reference>
<reference key="2">
    <citation type="journal article" date="1997" name="DNA Res.">
        <title>Construction of a contiguous 874-kb sequence of the Escherichia coli-K12 genome corresponding to 50.0-68.8 min on the linkage map and analysis of its sequence features.</title>
        <authorList>
            <person name="Yamamoto Y."/>
            <person name="Aiba H."/>
            <person name="Baba T."/>
            <person name="Hayashi K."/>
            <person name="Inada T."/>
            <person name="Isono K."/>
            <person name="Itoh T."/>
            <person name="Kimura S."/>
            <person name="Kitagawa M."/>
            <person name="Makino K."/>
            <person name="Miki T."/>
            <person name="Mitsuhashi N."/>
            <person name="Mizobuchi K."/>
            <person name="Mori H."/>
            <person name="Nakade S."/>
            <person name="Nakamura Y."/>
            <person name="Nashimoto H."/>
            <person name="Oshima T."/>
            <person name="Oyama S."/>
            <person name="Saito N."/>
            <person name="Sampei G."/>
            <person name="Satoh Y."/>
            <person name="Sivasundaram S."/>
            <person name="Tagami H."/>
            <person name="Takahashi H."/>
            <person name="Takeda J."/>
            <person name="Takemoto K."/>
            <person name="Uehara K."/>
            <person name="Wada C."/>
            <person name="Yamagata S."/>
            <person name="Horiuchi T."/>
        </authorList>
    </citation>
    <scope>NUCLEOTIDE SEQUENCE [LARGE SCALE GENOMIC DNA]</scope>
    <source>
        <strain>K12 / W3110 / ATCC 27325 / DSM 5911</strain>
    </source>
</reference>
<reference key="3">
    <citation type="journal article" date="1997" name="Science">
        <title>The complete genome sequence of Escherichia coli K-12.</title>
        <authorList>
            <person name="Blattner F.R."/>
            <person name="Plunkett G. III"/>
            <person name="Bloch C.A."/>
            <person name="Perna N.T."/>
            <person name="Burland V."/>
            <person name="Riley M."/>
            <person name="Collado-Vides J."/>
            <person name="Glasner J.D."/>
            <person name="Rode C.K."/>
            <person name="Mayhew G.F."/>
            <person name="Gregor J."/>
            <person name="Davis N.W."/>
            <person name="Kirkpatrick H.A."/>
            <person name="Goeden M.A."/>
            <person name="Rose D.J."/>
            <person name="Mau B."/>
            <person name="Shao Y."/>
        </authorList>
    </citation>
    <scope>NUCLEOTIDE SEQUENCE [LARGE SCALE GENOMIC DNA]</scope>
    <source>
        <strain>K12 / MG1655 / ATCC 47076</strain>
    </source>
</reference>
<reference key="4">
    <citation type="journal article" date="2006" name="Mol. Syst. Biol.">
        <title>Highly accurate genome sequences of Escherichia coli K-12 strains MG1655 and W3110.</title>
        <authorList>
            <person name="Hayashi K."/>
            <person name="Morooka N."/>
            <person name="Yamamoto Y."/>
            <person name="Fujita K."/>
            <person name="Isono K."/>
            <person name="Choi S."/>
            <person name="Ohtsubo E."/>
            <person name="Baba T."/>
            <person name="Wanner B.L."/>
            <person name="Mori H."/>
            <person name="Horiuchi T."/>
        </authorList>
    </citation>
    <scope>NUCLEOTIDE SEQUENCE [LARGE SCALE GENOMIC DNA]</scope>
    <source>
        <strain>K12 / W3110 / ATCC 27325 / DSM 5911</strain>
    </source>
</reference>
<reference key="5">
    <citation type="journal article" date="1997" name="Electrophoresis">
        <title>Comparing the predicted and observed properties of proteins encoded in the genome of Escherichia coli K-12.</title>
        <authorList>
            <person name="Link A.J."/>
            <person name="Robison K."/>
            <person name="Church G.M."/>
        </authorList>
    </citation>
    <scope>PROTEIN SEQUENCE OF 23-40</scope>
    <source>
        <strain>K12 / EMG2</strain>
    </source>
</reference>
<reference key="6">
    <citation type="journal article" date="1998" name="J. Mol. Biol.">
        <title>Protein identification with N and C-terminal sequence tags in proteome projects.</title>
        <authorList>
            <person name="Wilkins M.R."/>
            <person name="Gasteiger E."/>
            <person name="Tonella L."/>
            <person name="Ou K."/>
            <person name="Tyler M."/>
            <person name="Sanchez J.-C."/>
            <person name="Gooley A.A."/>
            <person name="Walsh B.J."/>
            <person name="Bairoch A."/>
            <person name="Appel R.D."/>
            <person name="Williams K.L."/>
            <person name="Hochstrasser D.F."/>
        </authorList>
    </citation>
    <scope>PROTEIN SEQUENCE OF 23-26</scope>
    <source>
        <strain>K12 / W3110 / ATCC 27325 / DSM 5911</strain>
    </source>
</reference>
<reference evidence="6" key="7">
    <citation type="journal article" date="1994" name="Biochemistry">
        <title>Refined 1.89-A structure of the histidine-binding protein complexed with histidine and its relationship with many other active transport/chemosensory proteins.</title>
        <authorList>
            <person name="Yao N."/>
            <person name="Trakhanov S."/>
            <person name="Quiocho F.A."/>
        </authorList>
    </citation>
    <scope>X-RAY CRYSTALLOGRAPHY (1.89 ANGSTROMS) IN COMPLEX WITH HISTIDINE</scope>
    <scope>DISULFIDE BOND</scope>
    <scope>DOMAIN</scope>
    <source>
        <strain>K12</strain>
    </source>
</reference>
<gene>
    <name type="primary">hisJ</name>
    <name type="ordered locus">b2309</name>
    <name type="ordered locus">JW2306</name>
</gene>
<proteinExistence type="evidence at protein level"/>
<sequence length="260" mass="28483">MKKLVLSLSLVLAFSSATAAFAAIPQNIRIGTDPTYAPFESKNSQGELVGFDIDLAKELCKRINTQCTFVENPLDALIPSLKAKKIDAIMSSLSITEKRQQEIAFTDKLYAADSRLVVAKNSDIQPTVESLKGKRVGVLQGTTQETFGNEHWAPKGIEIVSYQGQDNIYSDLTAGRIDAAFQDEVAASEGFLKQPVGKDYKFGGPSVKDEKLFGVGTGMGLRKEDNELREALNKAFAEMRADGTYEKLAKKYFDFDVYGG</sequence>
<accession>P0AEU0</accession>
<accession>P39182</accession>
<accession>P77763</accession>
<feature type="signal peptide" evidence="3 4">
    <location>
        <begin position="1"/>
        <end position="22"/>
    </location>
</feature>
<feature type="chain" id="PRO_0000031762" description="Histidine-binding periplasmic protein">
    <location>
        <begin position="23"/>
        <end position="260"/>
    </location>
</feature>
<feature type="binding site" evidence="2 6">
    <location>
        <position position="91"/>
    </location>
    <ligand>
        <name>L-histidine</name>
        <dbReference type="ChEBI" id="CHEBI:57595"/>
    </ligand>
</feature>
<feature type="binding site" evidence="2 6">
    <location>
        <position position="92"/>
    </location>
    <ligand>
        <name>L-histidine</name>
        <dbReference type="ChEBI" id="CHEBI:57595"/>
    </ligand>
</feature>
<feature type="binding site" evidence="2 6">
    <location>
        <position position="94"/>
    </location>
    <ligand>
        <name>L-histidine</name>
        <dbReference type="ChEBI" id="CHEBI:57595"/>
    </ligand>
</feature>
<feature type="binding site" evidence="2 6">
    <location>
        <position position="99"/>
    </location>
    <ligand>
        <name>L-histidine</name>
        <dbReference type="ChEBI" id="CHEBI:57595"/>
    </ligand>
</feature>
<feature type="binding site" evidence="2 6">
    <location>
        <position position="143"/>
    </location>
    <ligand>
        <name>L-histidine</name>
        <dbReference type="ChEBI" id="CHEBI:57595"/>
    </ligand>
</feature>
<feature type="binding site" evidence="2 6">
    <location>
        <position position="183"/>
    </location>
    <ligand>
        <name>L-histidine</name>
        <dbReference type="ChEBI" id="CHEBI:57595"/>
    </ligand>
</feature>
<feature type="disulfide bond" evidence="2 6">
    <location>
        <begin position="60"/>
        <end position="67"/>
    </location>
</feature>
<feature type="sequence conflict" description="In Ref. 1; AAA85769." evidence="5" ref="1">
    <original>F</original>
    <variation>L</variation>
    <location>
        <position position="21"/>
    </location>
</feature>
<feature type="sequence conflict" description="In Ref. 1; AAA85769." evidence="5" ref="1">
    <original>S</original>
    <variation>G</variation>
    <location>
        <position position="188"/>
    </location>
</feature>
<feature type="strand" evidence="7">
    <location>
        <begin position="29"/>
        <end position="32"/>
    </location>
</feature>
<feature type="turn" evidence="7">
    <location>
        <begin position="37"/>
        <end position="39"/>
    </location>
</feature>
<feature type="strand" evidence="7">
    <location>
        <begin position="40"/>
        <end position="42"/>
    </location>
</feature>
<feature type="strand" evidence="7">
    <location>
        <begin position="48"/>
        <end position="50"/>
    </location>
</feature>
<feature type="helix" evidence="7">
    <location>
        <begin position="51"/>
        <end position="62"/>
    </location>
</feature>
<feature type="strand" evidence="7">
    <location>
        <begin position="68"/>
        <end position="71"/>
    </location>
</feature>
<feature type="helix" evidence="7">
    <location>
        <begin position="74"/>
        <end position="82"/>
    </location>
</feature>
<feature type="strand" evidence="7">
    <location>
        <begin position="87"/>
        <end position="89"/>
    </location>
</feature>
<feature type="helix" evidence="7">
    <location>
        <begin position="97"/>
        <end position="100"/>
    </location>
</feature>
<feature type="strand" evidence="7">
    <location>
        <begin position="103"/>
        <end position="105"/>
    </location>
</feature>
<feature type="strand" evidence="7">
    <location>
        <begin position="114"/>
        <end position="121"/>
    </location>
</feature>
<feature type="helix" evidence="7">
    <location>
        <begin position="128"/>
        <end position="131"/>
    </location>
</feature>
<feature type="strand" evidence="7">
    <location>
        <begin position="135"/>
        <end position="139"/>
    </location>
</feature>
<feature type="helix" evidence="7">
    <location>
        <begin position="143"/>
        <end position="151"/>
    </location>
</feature>
<feature type="helix" evidence="7">
    <location>
        <begin position="153"/>
        <end position="155"/>
    </location>
</feature>
<feature type="strand" evidence="7">
    <location>
        <begin position="158"/>
        <end position="164"/>
    </location>
</feature>
<feature type="helix" evidence="7">
    <location>
        <begin position="165"/>
        <end position="173"/>
    </location>
</feature>
<feature type="strand" evidence="7">
    <location>
        <begin position="176"/>
        <end position="183"/>
    </location>
</feature>
<feature type="helix" evidence="7">
    <location>
        <begin position="184"/>
        <end position="190"/>
    </location>
</feature>
<feature type="turn" evidence="7">
    <location>
        <begin position="191"/>
        <end position="193"/>
    </location>
</feature>
<feature type="helix" evidence="7">
    <location>
        <begin position="195"/>
        <end position="199"/>
    </location>
</feature>
<feature type="strand" evidence="7">
    <location>
        <begin position="200"/>
        <end position="205"/>
    </location>
</feature>
<feature type="turn" evidence="7">
    <location>
        <begin position="210"/>
        <end position="212"/>
    </location>
</feature>
<feature type="strand" evidence="7">
    <location>
        <begin position="215"/>
        <end position="217"/>
    </location>
</feature>
<feature type="helix" evidence="7">
    <location>
        <begin position="226"/>
        <end position="241"/>
    </location>
</feature>
<feature type="helix" evidence="7">
    <location>
        <begin position="244"/>
        <end position="250"/>
    </location>
</feature>
<organism>
    <name type="scientific">Escherichia coli (strain K12)</name>
    <dbReference type="NCBI Taxonomy" id="83333"/>
    <lineage>
        <taxon>Bacteria</taxon>
        <taxon>Pseudomonadati</taxon>
        <taxon>Pseudomonadota</taxon>
        <taxon>Gammaproteobacteria</taxon>
        <taxon>Enterobacterales</taxon>
        <taxon>Enterobacteriaceae</taxon>
        <taxon>Escherichia</taxon>
    </lineage>
</organism>
<dbReference type="EMBL" id="U47027">
    <property type="protein sequence ID" value="AAA85769.1"/>
    <property type="molecule type" value="Genomic_DNA"/>
</dbReference>
<dbReference type="EMBL" id="U00096">
    <property type="protein sequence ID" value="AAC75369.1"/>
    <property type="molecule type" value="Genomic_DNA"/>
</dbReference>
<dbReference type="EMBL" id="AP009048">
    <property type="protein sequence ID" value="BAA16155.1"/>
    <property type="molecule type" value="Genomic_DNA"/>
</dbReference>
<dbReference type="PIR" id="C65003">
    <property type="entry name" value="C65003"/>
</dbReference>
<dbReference type="RefSeq" id="NP_416812.1">
    <property type="nucleotide sequence ID" value="NC_000913.3"/>
</dbReference>
<dbReference type="RefSeq" id="WP_000737621.1">
    <property type="nucleotide sequence ID" value="NZ_STEB01000008.1"/>
</dbReference>
<dbReference type="PDB" id="1HSL">
    <property type="method" value="X-ray"/>
    <property type="resolution" value="1.89 A"/>
    <property type="chains" value="A/B=23-260"/>
</dbReference>
<dbReference type="PDBsum" id="1HSL"/>
<dbReference type="BMRB" id="P0AEU0"/>
<dbReference type="SASBDB" id="P0AEU0"/>
<dbReference type="SMR" id="P0AEU0"/>
<dbReference type="BioGRID" id="4260524">
    <property type="interactions" value="22"/>
</dbReference>
<dbReference type="ComplexPortal" id="CPX-4328">
    <property type="entry name" value="Histidine ABC transporter complex"/>
</dbReference>
<dbReference type="DIP" id="DIP-9908N"/>
<dbReference type="FunCoup" id="P0AEU0">
    <property type="interactions" value="268"/>
</dbReference>
<dbReference type="IntAct" id="P0AEU0">
    <property type="interactions" value="7"/>
</dbReference>
<dbReference type="STRING" id="511145.b2309"/>
<dbReference type="BindingDB" id="P0AEU0"/>
<dbReference type="TCDB" id="3.A.1.3.29">
    <property type="family name" value="the atp-binding cassette (abc) superfamily"/>
</dbReference>
<dbReference type="jPOST" id="P0AEU0"/>
<dbReference type="PaxDb" id="511145-b2309"/>
<dbReference type="EnsemblBacteria" id="AAC75369">
    <property type="protein sequence ID" value="AAC75369"/>
    <property type="gene ID" value="b2309"/>
</dbReference>
<dbReference type="GeneID" id="93774865"/>
<dbReference type="GeneID" id="945309"/>
<dbReference type="KEGG" id="ecj:JW2306"/>
<dbReference type="KEGG" id="eco:b2309"/>
<dbReference type="KEGG" id="ecoc:C3026_12875"/>
<dbReference type="PATRIC" id="fig|511145.12.peg.2404"/>
<dbReference type="EchoBASE" id="EB2045"/>
<dbReference type="eggNOG" id="COG0834">
    <property type="taxonomic scope" value="Bacteria"/>
</dbReference>
<dbReference type="HOGENOM" id="CLU_019602_18_0_6"/>
<dbReference type="InParanoid" id="P0AEU0"/>
<dbReference type="OMA" id="FSEEPYG"/>
<dbReference type="OrthoDB" id="9768183at2"/>
<dbReference type="PhylomeDB" id="P0AEU0"/>
<dbReference type="BioCyc" id="EcoCyc:HISJ-MONOMER"/>
<dbReference type="EvolutionaryTrace" id="P0AEU0"/>
<dbReference type="PRO" id="PR:P0AEU0"/>
<dbReference type="Proteomes" id="UP000000625">
    <property type="component" value="Chromosome"/>
</dbReference>
<dbReference type="GO" id="GO:0055052">
    <property type="term" value="C:ATP-binding cassette (ABC) transporter complex, substrate-binding subunit-containing"/>
    <property type="evidence" value="ECO:0000303"/>
    <property type="project" value="ComplexPortal"/>
</dbReference>
<dbReference type="GO" id="GO:0016020">
    <property type="term" value="C:membrane"/>
    <property type="evidence" value="ECO:0000303"/>
    <property type="project" value="ComplexPortal"/>
</dbReference>
<dbReference type="GO" id="GO:0030288">
    <property type="term" value="C:outer membrane-bounded periplasmic space"/>
    <property type="evidence" value="ECO:0000314"/>
    <property type="project" value="EcoCyc"/>
</dbReference>
<dbReference type="GO" id="GO:0016597">
    <property type="term" value="F:amino acid binding"/>
    <property type="evidence" value="ECO:0000314"/>
    <property type="project" value="EcoCyc"/>
</dbReference>
<dbReference type="GO" id="GO:1903810">
    <property type="term" value="P:L-histidine import across plasma membrane"/>
    <property type="evidence" value="ECO:0000303"/>
    <property type="project" value="ComplexPortal"/>
</dbReference>
<dbReference type="CDD" id="cd13703">
    <property type="entry name" value="PBP2_HisJ_LAO"/>
    <property type="match status" value="1"/>
</dbReference>
<dbReference type="FunFam" id="3.40.190.10:FF:000020">
    <property type="entry name" value="Histidine ABC transporter substrate-binding periplasmic protein"/>
    <property type="match status" value="1"/>
</dbReference>
<dbReference type="Gene3D" id="3.40.190.10">
    <property type="entry name" value="Periplasmic binding protein-like II"/>
    <property type="match status" value="2"/>
</dbReference>
<dbReference type="InterPro" id="IPR005768">
    <property type="entry name" value="Lys_Arg_Orn-bd"/>
</dbReference>
<dbReference type="InterPro" id="IPR018313">
    <property type="entry name" value="SBP_3_CS"/>
</dbReference>
<dbReference type="InterPro" id="IPR001638">
    <property type="entry name" value="Solute-binding_3/MltF_N"/>
</dbReference>
<dbReference type="NCBIfam" id="TIGR01096">
    <property type="entry name" value="3A0103s03R"/>
    <property type="match status" value="1"/>
</dbReference>
<dbReference type="NCBIfam" id="NF011965">
    <property type="entry name" value="PRK15437.1"/>
    <property type="match status" value="1"/>
</dbReference>
<dbReference type="PANTHER" id="PTHR35936:SF13">
    <property type="entry name" value="HISTIDINE-BINDING PERIPLASMIC PROTEIN"/>
    <property type="match status" value="1"/>
</dbReference>
<dbReference type="PANTHER" id="PTHR35936">
    <property type="entry name" value="MEMBRANE-BOUND LYTIC MUREIN TRANSGLYCOSYLASE F"/>
    <property type="match status" value="1"/>
</dbReference>
<dbReference type="Pfam" id="PF00497">
    <property type="entry name" value="SBP_bac_3"/>
    <property type="match status" value="1"/>
</dbReference>
<dbReference type="SMART" id="SM00062">
    <property type="entry name" value="PBPb"/>
    <property type="match status" value="1"/>
</dbReference>
<dbReference type="SUPFAM" id="SSF53850">
    <property type="entry name" value="Periplasmic binding protein-like II"/>
    <property type="match status" value="1"/>
</dbReference>
<dbReference type="PROSITE" id="PS01039">
    <property type="entry name" value="SBP_BACTERIAL_3"/>
    <property type="match status" value="1"/>
</dbReference>
<name>HISJ_ECOLI</name>
<evidence type="ECO:0000250" key="1">
    <source>
        <dbReference type="UniProtKB" id="P02910"/>
    </source>
</evidence>
<evidence type="ECO:0000269" key="2">
    <source>
    </source>
</evidence>
<evidence type="ECO:0000269" key="3">
    <source>
    </source>
</evidence>
<evidence type="ECO:0000269" key="4">
    <source>
    </source>
</evidence>
<evidence type="ECO:0000305" key="5"/>
<evidence type="ECO:0007744" key="6">
    <source>
        <dbReference type="PDB" id="1HSL"/>
    </source>
</evidence>
<evidence type="ECO:0007829" key="7">
    <source>
        <dbReference type="PDB" id="1HSL"/>
    </source>
</evidence>
<comment type="function">
    <text evidence="1">Part of the ABC transporter complex HisPMQJ involved in histidine transport (By similarity). Binds histidine (By similarity). Interacts with HisQMP and stimulates ATPase activity of HisP, which results in histidine translocation (By similarity).</text>
</comment>
<comment type="subunit">
    <text evidence="1">The complex is composed of two ATP-binding proteins (HisP), two transmembrane proteins (HisM and HisQ) and a solute-binding protein (HisJ).</text>
</comment>
<comment type="subcellular location">
    <subcellularLocation>
        <location evidence="1">Periplasm</location>
    </subcellularLocation>
</comment>
<comment type="domain">
    <text evidence="2">Has a bi-lobal structure (PubMed:8161536). Contains two similar globular domains separated by a deep cleft wherein the ligand-binding site is located (PubMed:8161536).</text>
</comment>
<comment type="similarity">
    <text evidence="5">Belongs to the bacterial solute-binding protein 3 family.</text>
</comment>